<organism>
    <name type="scientific">Clavibacter sepedonicus</name>
    <name type="common">Clavibacter michiganensis subsp. sepedonicus</name>
    <dbReference type="NCBI Taxonomy" id="31964"/>
    <lineage>
        <taxon>Bacteria</taxon>
        <taxon>Bacillati</taxon>
        <taxon>Actinomycetota</taxon>
        <taxon>Actinomycetes</taxon>
        <taxon>Micrococcales</taxon>
        <taxon>Microbacteriaceae</taxon>
        <taxon>Clavibacter</taxon>
    </lineage>
</organism>
<protein>
    <recommendedName>
        <fullName evidence="1">Large ribosomal subunit protein bL19</fullName>
    </recommendedName>
    <alternativeName>
        <fullName evidence="2">50S ribosomal protein L19</fullName>
    </alternativeName>
</protein>
<name>RL19_CLASE</name>
<dbReference type="EMBL" id="AM849034">
    <property type="protein sequence ID" value="CAQ00881.1"/>
    <property type="molecule type" value="Genomic_DNA"/>
</dbReference>
<dbReference type="RefSeq" id="WP_012298189.1">
    <property type="nucleotide sequence ID" value="NZ_MZMN01000003.1"/>
</dbReference>
<dbReference type="SMR" id="B0REN4"/>
<dbReference type="STRING" id="31964.CMS0761"/>
<dbReference type="GeneID" id="92983131"/>
<dbReference type="KEGG" id="cms:CMS0761"/>
<dbReference type="eggNOG" id="COG0335">
    <property type="taxonomic scope" value="Bacteria"/>
</dbReference>
<dbReference type="HOGENOM" id="CLU_103507_2_1_11"/>
<dbReference type="OrthoDB" id="9803541at2"/>
<dbReference type="Proteomes" id="UP000001318">
    <property type="component" value="Chromosome"/>
</dbReference>
<dbReference type="GO" id="GO:0022625">
    <property type="term" value="C:cytosolic large ribosomal subunit"/>
    <property type="evidence" value="ECO:0007669"/>
    <property type="project" value="TreeGrafter"/>
</dbReference>
<dbReference type="GO" id="GO:0003735">
    <property type="term" value="F:structural constituent of ribosome"/>
    <property type="evidence" value="ECO:0007669"/>
    <property type="project" value="InterPro"/>
</dbReference>
<dbReference type="GO" id="GO:0006412">
    <property type="term" value="P:translation"/>
    <property type="evidence" value="ECO:0007669"/>
    <property type="project" value="UniProtKB-UniRule"/>
</dbReference>
<dbReference type="FunFam" id="2.30.30.790:FF:000001">
    <property type="entry name" value="50S ribosomal protein L19"/>
    <property type="match status" value="1"/>
</dbReference>
<dbReference type="Gene3D" id="2.30.30.790">
    <property type="match status" value="1"/>
</dbReference>
<dbReference type="HAMAP" id="MF_00402">
    <property type="entry name" value="Ribosomal_bL19"/>
    <property type="match status" value="1"/>
</dbReference>
<dbReference type="InterPro" id="IPR001857">
    <property type="entry name" value="Ribosomal_bL19"/>
</dbReference>
<dbReference type="InterPro" id="IPR018257">
    <property type="entry name" value="Ribosomal_bL19_CS"/>
</dbReference>
<dbReference type="InterPro" id="IPR038657">
    <property type="entry name" value="Ribosomal_bL19_sf"/>
</dbReference>
<dbReference type="InterPro" id="IPR008991">
    <property type="entry name" value="Translation_prot_SH3-like_sf"/>
</dbReference>
<dbReference type="NCBIfam" id="TIGR01024">
    <property type="entry name" value="rplS_bact"/>
    <property type="match status" value="1"/>
</dbReference>
<dbReference type="PANTHER" id="PTHR15680:SF9">
    <property type="entry name" value="LARGE RIBOSOMAL SUBUNIT PROTEIN BL19M"/>
    <property type="match status" value="1"/>
</dbReference>
<dbReference type="PANTHER" id="PTHR15680">
    <property type="entry name" value="RIBOSOMAL PROTEIN L19"/>
    <property type="match status" value="1"/>
</dbReference>
<dbReference type="Pfam" id="PF01245">
    <property type="entry name" value="Ribosomal_L19"/>
    <property type="match status" value="1"/>
</dbReference>
<dbReference type="PIRSF" id="PIRSF002191">
    <property type="entry name" value="Ribosomal_L19"/>
    <property type="match status" value="1"/>
</dbReference>
<dbReference type="PRINTS" id="PR00061">
    <property type="entry name" value="RIBOSOMALL19"/>
</dbReference>
<dbReference type="SUPFAM" id="SSF50104">
    <property type="entry name" value="Translation proteins SH3-like domain"/>
    <property type="match status" value="1"/>
</dbReference>
<dbReference type="PROSITE" id="PS01015">
    <property type="entry name" value="RIBOSOMAL_L19"/>
    <property type="match status" value="1"/>
</dbReference>
<feature type="chain" id="PRO_1000080342" description="Large ribosomal subunit protein bL19">
    <location>
        <begin position="1"/>
        <end position="114"/>
    </location>
</feature>
<comment type="function">
    <text evidence="1">This protein is located at the 30S-50S ribosomal subunit interface and may play a role in the structure and function of the aminoacyl-tRNA binding site.</text>
</comment>
<comment type="similarity">
    <text evidence="1">Belongs to the bacterial ribosomal protein bL19 family.</text>
</comment>
<accession>B0REN4</accession>
<keyword id="KW-0687">Ribonucleoprotein</keyword>
<keyword id="KW-0689">Ribosomal protein</keyword>
<gene>
    <name evidence="1" type="primary">rplS</name>
    <name type="ordered locus">CMS0761</name>
</gene>
<sequence>MHILDSVDKASLRSDIPDFRAGDTVKVHVNIVEGSRSRIQVFQGIVIGRQGEGVRETFCVRKVSFQVGVERTFPVHSPVIDHIEVVTRGDVRRAKLYFLRDLRGKKAKIKEKRS</sequence>
<evidence type="ECO:0000255" key="1">
    <source>
        <dbReference type="HAMAP-Rule" id="MF_00402"/>
    </source>
</evidence>
<evidence type="ECO:0000305" key="2"/>
<proteinExistence type="inferred from homology"/>
<reference key="1">
    <citation type="journal article" date="2008" name="J. Bacteriol.">
        <title>Genome of the actinomycete plant pathogen Clavibacter michiganensis subsp. sepedonicus suggests recent niche adaptation.</title>
        <authorList>
            <person name="Bentley S.D."/>
            <person name="Corton C."/>
            <person name="Brown S.E."/>
            <person name="Barron A."/>
            <person name="Clark L."/>
            <person name="Doggett J."/>
            <person name="Harris B."/>
            <person name="Ormond D."/>
            <person name="Quail M.A."/>
            <person name="May G."/>
            <person name="Francis D."/>
            <person name="Knudson D."/>
            <person name="Parkhill J."/>
            <person name="Ishimaru C.A."/>
        </authorList>
    </citation>
    <scope>NUCLEOTIDE SEQUENCE [LARGE SCALE GENOMIC DNA]</scope>
    <source>
        <strain>ATCC 33113 / DSM 20744 / JCM 9667 / LMG 2889 / ICMP 2535 / C-1</strain>
    </source>
</reference>